<name>T1SB_ECOLX</name>
<feature type="chain" id="PRO_0000198032" description="Type I restriction enzyme EcoBI specificity subunit">
    <location>
        <begin position="1"/>
        <end position="474"/>
    </location>
</feature>
<dbReference type="EMBL" id="V00286">
    <property type="protein sequence ID" value="CAA23552.1"/>
    <property type="molecule type" value="Genomic_DNA"/>
</dbReference>
<dbReference type="RefSeq" id="WP_000009567.1">
    <property type="nucleotide sequence ID" value="NZ_WTSN01000071.1"/>
</dbReference>
<dbReference type="SMR" id="P06990"/>
<dbReference type="REBASE" id="191897">
    <property type="entry name" value="S.Apa1447ORF2439P"/>
</dbReference>
<dbReference type="REBASE" id="246645">
    <property type="entry name" value="S.Mmy2708ORF27P"/>
</dbReference>
<dbReference type="REBASE" id="3639">
    <property type="entry name" value="S.EcoBI"/>
</dbReference>
<dbReference type="PRO" id="PR:P06990"/>
<dbReference type="GO" id="GO:0003677">
    <property type="term" value="F:DNA binding"/>
    <property type="evidence" value="ECO:0007669"/>
    <property type="project" value="UniProtKB-KW"/>
</dbReference>
<dbReference type="GO" id="GO:0009307">
    <property type="term" value="P:DNA restriction-modification system"/>
    <property type="evidence" value="ECO:0007669"/>
    <property type="project" value="UniProtKB-KW"/>
</dbReference>
<dbReference type="CDD" id="cd17257">
    <property type="entry name" value="RMtype1_S_EcoBI-TRD1-CR1_like"/>
    <property type="match status" value="1"/>
</dbReference>
<dbReference type="CDD" id="cd17256">
    <property type="entry name" value="RMtype1_S_EcoJA65PI-TRD1-CR1_like"/>
    <property type="match status" value="1"/>
</dbReference>
<dbReference type="Gene3D" id="3.90.220.20">
    <property type="entry name" value="DNA methylase specificity domains"/>
    <property type="match status" value="2"/>
</dbReference>
<dbReference type="InterPro" id="IPR000055">
    <property type="entry name" value="Restrct_endonuc_typeI_TRD"/>
</dbReference>
<dbReference type="InterPro" id="IPR044946">
    <property type="entry name" value="Restrct_endonuc_typeI_TRD_sf"/>
</dbReference>
<dbReference type="InterPro" id="IPR051212">
    <property type="entry name" value="Type-I_RE_S_subunit"/>
</dbReference>
<dbReference type="PANTHER" id="PTHR43140:SF1">
    <property type="entry name" value="TYPE I RESTRICTION ENZYME ECOKI SPECIFICITY SUBUNIT"/>
    <property type="match status" value="1"/>
</dbReference>
<dbReference type="PANTHER" id="PTHR43140">
    <property type="entry name" value="TYPE-1 RESTRICTION ENZYME ECOKI SPECIFICITY PROTEIN"/>
    <property type="match status" value="1"/>
</dbReference>
<dbReference type="Pfam" id="PF01420">
    <property type="entry name" value="Methylase_S"/>
    <property type="match status" value="2"/>
</dbReference>
<dbReference type="SUPFAM" id="SSF116734">
    <property type="entry name" value="DNA methylase specificity domain"/>
    <property type="match status" value="2"/>
</dbReference>
<evidence type="ECO:0000250" key="1">
    <source>
        <dbReference type="UniProtKB" id="P05719"/>
    </source>
</evidence>
<evidence type="ECO:0000269" key="2">
    <source>
    </source>
</evidence>
<evidence type="ECO:0000303" key="3">
    <source>
    </source>
</evidence>
<evidence type="ECO:0000303" key="4">
    <source>
    </source>
</evidence>
<evidence type="ECO:0000305" key="5"/>
<sequence length="474" mass="53513">MSFNSTSKELIEQNINGLLSIHDSWLRISMDSVANITNGFAFKSSEFNNRKDGVPLIRIRDVLKGNTSTYYSGQIPEGYWVYPEDLIVGMDGDFNATIWCSEPALLNQRVCKIEVQEDKYNKRFFYHALPGYLSAINANTSSVTVKHLSSRTLQDTLLPLPPLAEQKIIAEKLDTLLAQVDSTKARLEQIPQILKRFRQAVLAAAVTGRLTKEDKDFITKKVELDNYKILIPEDWSETILNNIINTQRPLCYGVVQPGDDIKDGIELIRVCDINDGEVDLNHLRKISKEIDLQYKRSKVRKNDILVTIVGAIGRIGIVREDINVNIARAVARISPEYKIIVPMFLHIWLSSPVMQTWLVQSSKEVARKTLNLKDLKNAFVPLPSIEEQHEIVRRVEQLFAYADSIEKQVNNALARVNNLTQSILAKAFRGELTAQWRAENPDLISGENSAAALLEKIKAERAASGGKKASRKKF</sequence>
<organism>
    <name type="scientific">Escherichia coli</name>
    <dbReference type="NCBI Taxonomy" id="562"/>
    <lineage>
        <taxon>Bacteria</taxon>
        <taxon>Pseudomonadati</taxon>
        <taxon>Pseudomonadota</taxon>
        <taxon>Gammaproteobacteria</taxon>
        <taxon>Enterobacterales</taxon>
        <taxon>Enterobacteriaceae</taxon>
        <taxon>Escherichia</taxon>
    </lineage>
</organism>
<accession>P06990</accession>
<gene>
    <name evidence="4" type="primary">hsdS</name>
    <name type="synonym">hss</name>
</gene>
<keyword id="KW-0238">DNA-binding</keyword>
<keyword id="KW-0680">Restriction system</keyword>
<proteinExistence type="evidence at protein level"/>
<reference key="1">
    <citation type="journal article" date="1983" name="J. Mol. Biol.">
        <title>Sequence diversity among related genes for recognition of specific targets in DNA molecules.</title>
        <authorList>
            <person name="Gough J.A."/>
            <person name="Murray N.E."/>
        </authorList>
    </citation>
    <scope>NUCLEOTIDE SEQUENCE [GENOMIC DNA]</scope>
    <source>
        <strain>B / 629</strain>
    </source>
</reference>
<reference key="2">
    <citation type="journal article" date="1972" name="J. Biol. Chem.">
        <title>The deoxyribonucleic acid modification and restriction enzymes of Escherichia coli B. II. Purification, subunit structure, and catalytic properties of the restriction endonuclease.</title>
        <authorList>
            <person name="Eskin B."/>
            <person name="Linn S."/>
        </authorList>
    </citation>
    <scope>FUNCTION</scope>
    <scope>SUBUNIT</scope>
    <source>
        <strain>B</strain>
    </source>
</reference>
<reference key="3">
    <citation type="journal article" date="2003" name="Nucleic Acids Res.">
        <title>A nomenclature for restriction enzymes, DNA methyltransferases, homing endonucleases and their genes.</title>
        <authorList>
            <person name="Roberts R.J."/>
            <person name="Belfort M."/>
            <person name="Bestor T."/>
            <person name="Bhagwat A.S."/>
            <person name="Bickle T.A."/>
            <person name="Bitinaite J."/>
            <person name="Blumenthal R.M."/>
            <person name="Degtyarev S.K."/>
            <person name="Dryden D.T."/>
            <person name="Dybvig K."/>
            <person name="Firman K."/>
            <person name="Gromova E.S."/>
            <person name="Gumport R.I."/>
            <person name="Halford S.E."/>
            <person name="Hattman S."/>
            <person name="Heitman J."/>
            <person name="Hornby D.P."/>
            <person name="Janulaitis A."/>
            <person name="Jeltsch A."/>
            <person name="Josephsen J."/>
            <person name="Kiss A."/>
            <person name="Klaenhammer T.R."/>
            <person name="Kobayashi I."/>
            <person name="Kong H."/>
            <person name="Krueger D.H."/>
            <person name="Lacks S."/>
            <person name="Marinus M.G."/>
            <person name="Miyahara M."/>
            <person name="Morgan R.D."/>
            <person name="Murray N.E."/>
            <person name="Nagaraja V."/>
            <person name="Piekarowicz A."/>
            <person name="Pingoud A."/>
            <person name="Raleigh E."/>
            <person name="Rao D.N."/>
            <person name="Reich N."/>
            <person name="Repin V.E."/>
            <person name="Selker E.U."/>
            <person name="Shaw P.C."/>
            <person name="Stein D.C."/>
            <person name="Stoddard B.L."/>
            <person name="Szybalski W."/>
            <person name="Trautner T.A."/>
            <person name="Van Etten J.L."/>
            <person name="Vitor J.M."/>
            <person name="Wilson G.G."/>
            <person name="Xu S.Y."/>
        </authorList>
    </citation>
    <scope>NOMENCLATURE</scope>
</reference>
<comment type="function">
    <text evidence="1 2 3">The specificity (S) subunit of a type I restriction enzyme; this subunit dictates DNA sequence specificity. The M and S subunits together form a methyltransferase (MTase) that methylates A-3 on the top strand and A-4 on the bottom strand of the sequence 5'-TGAN(8)TGCT-3'. In the presence of the R subunit the complex can also act as an endonuclease, binding to the same target sequence but cutting the DNA some distance from this site. Whether the DNA is cut or modified depends on the methylation state of the target sequence. When the target site is unmodified, the DNA is cut. When the target site is hemimethylated, the complex acts as a maintenance MTase modifying the DNA so that both strands become methylated (PubMed:12654995, PubMed:4568607). After locating a non-methylated recognition site, the enzyme complex serves as a molecular motor that translocates DNA in an ATP-dependent manner until a collision occurs that triggers cleavage (By similarity).</text>
</comment>
<comment type="subunit">
    <text evidence="1 2">The type I restriction/modification system is composed of three polypeptides R, M and S (PubMed:4568607). The restriction enzyme has stoichiometry R(2)M(2)S(1) while the methyltransferase is M(2)S(1) (By similarity).</text>
</comment>
<comment type="domain">
    <text evidence="1">Contains two DNA recognition domains, each specifying recognition of one of the two defined components of the target sequence.</text>
</comment>
<comment type="miscellaneous">
    <text evidence="1">Type I restriction and modification enzymes are complex, multifunctional systems which require ATP, S-adenosyl methionine and Mg(2+) as cofactors and, in addition to their endonucleolytic and methylase activities, are potent DNA-dependent ATPases.</text>
</comment>
<comment type="similarity">
    <text evidence="5">Belongs to the type-I restriction system S methylase family.</text>
</comment>
<protein>
    <recommendedName>
        <fullName evidence="5">Type I restriction enzyme EcoBI specificity subunit</fullName>
        <shortName>S protein</shortName>
    </recommendedName>
    <alternativeName>
        <fullName evidence="3">Type I specificity subunit S.EcoBI</fullName>
        <shortName evidence="3">S.EcoBI</shortName>
    </alternativeName>
    <alternativeName>
        <fullName>Type-1 restriction enzyme EcoBI specificity subunit</fullName>
    </alternativeName>
</protein>